<name>NR1I3_RAT</name>
<reference key="1">
    <citation type="journal article" date="2001" name="Mol. Pharmacol.">
        <title>Nuclear receptor CAR as a regulatory factor for the sexually dimorphic induction of CYB2B1 gene by phenobarbital in rat livers.</title>
        <authorList>
            <person name="Yoshinari K."/>
            <person name="Sueyoshi T."/>
            <person name="Moore R."/>
            <person name="Negishi M."/>
        </authorList>
    </citation>
    <scope>NUCLEOTIDE SEQUENCE [MRNA]</scope>
    <source>
        <strain>Fischer</strain>
        <strain>Wistar Kyoto</strain>
        <tissue>Liver</tissue>
    </source>
</reference>
<reference key="2">
    <citation type="journal article" date="2003" name="J. Health Sci.">
        <title>Role of the defective splicing of mRNA in the lack of pulmonary expression of constitutively active receptor in rat.</title>
        <authorList>
            <person name="Kanno Y."/>
            <person name="Aoki S."/>
            <person name="Nakahama T."/>
            <person name="Inouye Y."/>
        </authorList>
    </citation>
    <scope>NUCLEOTIDE SEQUENCE [GENOMIC DNA / MRNA]</scope>
    <source>
        <strain>Wistar</strain>
        <tissue>Liver</tissue>
    </source>
</reference>
<proteinExistence type="evidence at transcript level"/>
<sequence>MTATLTLETMTSEEEYGPRNCVVCGDRATGYHFHALTCEGCKGFFRRTVSKTIGPICPFAGRCEVSKAQRRHCPACRLQKCLNVGMRKDMILSAEALALRRARQARRRAQKASLQLSQQQKELIQTLLGAHTRHVGPMFDQFVQFRPPAYLFSHHRPFQPLAPVLPLLTHFADINTFMVQQIIKFTKDLPLFRSLTMEDQISLLKGAAVEILHISLNTTFCLQTQNFFCGPLCYKMEDAVHVGFQYEFLELIIHFHKTLKRLQLQEPEYALMAAMALFSPDRPGVTQREEIDQLQEEVALILNNHIMEQQSRLQSRFLYAKLMGLLAELRSINSAYSYEIHRIQGLSAMMPLLGEICS</sequence>
<accession>Q9QUS1</accession>
<evidence type="ECO:0000250" key="1"/>
<evidence type="ECO:0000250" key="2">
    <source>
        <dbReference type="UniProtKB" id="O35627"/>
    </source>
</evidence>
<evidence type="ECO:0000250" key="3">
    <source>
        <dbReference type="UniProtKB" id="Q14994"/>
    </source>
</evidence>
<evidence type="ECO:0000255" key="4">
    <source>
        <dbReference type="PROSITE-ProRule" id="PRU00407"/>
    </source>
</evidence>
<evidence type="ECO:0000255" key="5">
    <source>
        <dbReference type="PROSITE-ProRule" id="PRU01189"/>
    </source>
</evidence>
<evidence type="ECO:0000305" key="6"/>
<comment type="function">
    <text evidence="1">Binds and transactivates the retinoic acid response elements that control expression of the retinoic acid receptor beta 2 and alcohol dehydrogenase 3 genes. Transactivates both the phenobarbital responsive element module of the human CYP2B6 gene and the CYP3A4 xenobiotic response element (By similarity).</text>
</comment>
<comment type="subunit">
    <text evidence="2">Heterodimer of NR1I3 and RXR. Interacts with PSMC4. Interacts with ECT2. Directly interacts with DNAJC7; this complex may also include HSP90 (By similarity). Interacts with CRY1 (By similarity). Interacts with CRY2 in a ligand-dependent manner (By similarity).</text>
</comment>
<comment type="subcellular location">
    <subcellularLocation>
        <location evidence="4">Nucleus</location>
    </subcellularLocation>
    <subcellularLocation>
        <location evidence="1">Cytoplasm</location>
    </subcellularLocation>
    <subcellularLocation>
        <location evidence="1">Cytoplasm</location>
        <location evidence="1">Cytoskeleton</location>
    </subcellularLocation>
    <text evidence="1">Recruited to the cytoplasm by DNAJC7.</text>
</comment>
<comment type="domain">
    <text>Composed by a short N-terminal domain followed by the DNA binding, hinge, and ligand binding/dimerization domains.</text>
</comment>
<comment type="PTM">
    <text evidence="1">Phosphorylated at Thr-48 by PKC, dephosphorylation of Thr-48 is required for nuclear translocation and activation.</text>
</comment>
<comment type="similarity">
    <text evidence="6">Belongs to the nuclear hormone receptor family. NR1 subfamily.</text>
</comment>
<gene>
    <name type="primary">Nr1i3</name>
    <name type="synonym">Car</name>
</gene>
<keyword id="KW-0010">Activator</keyword>
<keyword id="KW-0963">Cytoplasm</keyword>
<keyword id="KW-0206">Cytoskeleton</keyword>
<keyword id="KW-0238">DNA-binding</keyword>
<keyword id="KW-0479">Metal-binding</keyword>
<keyword id="KW-0539">Nucleus</keyword>
<keyword id="KW-0597">Phosphoprotein</keyword>
<keyword id="KW-0675">Receptor</keyword>
<keyword id="KW-1185">Reference proteome</keyword>
<keyword id="KW-0804">Transcription</keyword>
<keyword id="KW-0805">Transcription regulation</keyword>
<keyword id="KW-0862">Zinc</keyword>
<keyword id="KW-0863">Zinc-finger</keyword>
<feature type="chain" id="PRO_0000053556" description="Nuclear receptor subfamily 1 group I member 3">
    <location>
        <begin position="1"/>
        <end position="358"/>
    </location>
</feature>
<feature type="domain" description="NR LBD" evidence="5">
    <location>
        <begin position="119"/>
        <end position="358"/>
    </location>
</feature>
<feature type="DNA-binding region" description="Nuclear receptor" evidence="4">
    <location>
        <begin position="18"/>
        <end position="93"/>
    </location>
</feature>
<feature type="zinc finger region" description="NR C4-type" evidence="4">
    <location>
        <begin position="21"/>
        <end position="41"/>
    </location>
</feature>
<feature type="zinc finger region" description="NR C4-type" evidence="4">
    <location>
        <begin position="57"/>
        <end position="81"/>
    </location>
</feature>
<feature type="modified residue" description="Phosphothreonine; by PKC" evidence="3">
    <location>
        <position position="48"/>
    </location>
</feature>
<dbReference type="EMBL" id="AF133095">
    <property type="protein sequence ID" value="AAF22567.1"/>
    <property type="molecule type" value="mRNA"/>
</dbReference>
<dbReference type="EMBL" id="AF133094">
    <property type="protein sequence ID" value="AAF22566.1"/>
    <property type="molecule type" value="mRNA"/>
</dbReference>
<dbReference type="EMBL" id="AB104736">
    <property type="protein sequence ID" value="BAC82431.1"/>
    <property type="molecule type" value="mRNA"/>
</dbReference>
<dbReference type="EMBL" id="AB105071">
    <property type="protein sequence ID" value="BAC84955.1"/>
    <property type="molecule type" value="Genomic_DNA"/>
</dbReference>
<dbReference type="RefSeq" id="NP_075230.1">
    <property type="nucleotide sequence ID" value="NM_022941.4"/>
</dbReference>
<dbReference type="SMR" id="Q9QUS1"/>
<dbReference type="FunCoup" id="Q9QUS1">
    <property type="interactions" value="96"/>
</dbReference>
<dbReference type="STRING" id="10116.ENSRNOP00000048836"/>
<dbReference type="ChEMBL" id="CHEMBL3509594"/>
<dbReference type="PhosphoSitePlus" id="Q9QUS1"/>
<dbReference type="PaxDb" id="10116-ENSRNOP00000048836"/>
<dbReference type="Ensembl" id="ENSRNOT00000049873.3">
    <property type="protein sequence ID" value="ENSRNOP00000048836.3"/>
    <property type="gene ID" value="ENSRNOG00000003260.7"/>
</dbReference>
<dbReference type="GeneID" id="65035"/>
<dbReference type="KEGG" id="rno:65035"/>
<dbReference type="UCSC" id="RGD:621400">
    <property type="organism name" value="rat"/>
</dbReference>
<dbReference type="AGR" id="RGD:621400"/>
<dbReference type="CTD" id="9970"/>
<dbReference type="RGD" id="621400">
    <property type="gene designation" value="Nr1i3"/>
</dbReference>
<dbReference type="eggNOG" id="KOG3575">
    <property type="taxonomic scope" value="Eukaryota"/>
</dbReference>
<dbReference type="GeneTree" id="ENSGT00940000160641"/>
<dbReference type="HOGENOM" id="CLU_007368_12_0_1"/>
<dbReference type="InParanoid" id="Q9QUS1"/>
<dbReference type="OMA" id="VHAGFQE"/>
<dbReference type="OrthoDB" id="6355676at2759"/>
<dbReference type="PhylomeDB" id="Q9QUS1"/>
<dbReference type="TreeFam" id="TF316304"/>
<dbReference type="Reactome" id="R-RNO-383280">
    <property type="pathway name" value="Nuclear Receptor transcription pathway"/>
</dbReference>
<dbReference type="PRO" id="PR:Q9QUS1"/>
<dbReference type="Proteomes" id="UP000002494">
    <property type="component" value="Chromosome 13"/>
</dbReference>
<dbReference type="GO" id="GO:0005737">
    <property type="term" value="C:cytoplasm"/>
    <property type="evidence" value="ECO:0000250"/>
    <property type="project" value="UniProtKB"/>
</dbReference>
<dbReference type="GO" id="GO:0005856">
    <property type="term" value="C:cytoskeleton"/>
    <property type="evidence" value="ECO:0007669"/>
    <property type="project" value="UniProtKB-SubCell"/>
</dbReference>
<dbReference type="GO" id="GO:0005829">
    <property type="term" value="C:cytosol"/>
    <property type="evidence" value="ECO:0000266"/>
    <property type="project" value="RGD"/>
</dbReference>
<dbReference type="GO" id="GO:0005654">
    <property type="term" value="C:nucleoplasm"/>
    <property type="evidence" value="ECO:0007669"/>
    <property type="project" value="Ensembl"/>
</dbReference>
<dbReference type="GO" id="GO:0005634">
    <property type="term" value="C:nucleus"/>
    <property type="evidence" value="ECO:0000250"/>
    <property type="project" value="UniProtKB"/>
</dbReference>
<dbReference type="GO" id="GO:0003677">
    <property type="term" value="F:DNA binding"/>
    <property type="evidence" value="ECO:0000266"/>
    <property type="project" value="RGD"/>
</dbReference>
<dbReference type="GO" id="GO:0001228">
    <property type="term" value="F:DNA-binding transcription activator activity, RNA polymerase II-specific"/>
    <property type="evidence" value="ECO:0000266"/>
    <property type="project" value="RGD"/>
</dbReference>
<dbReference type="GO" id="GO:0004879">
    <property type="term" value="F:nuclear receptor activity"/>
    <property type="evidence" value="ECO:0000266"/>
    <property type="project" value="RGD"/>
</dbReference>
<dbReference type="GO" id="GO:0000978">
    <property type="term" value="F:RNA polymerase II cis-regulatory region sequence-specific DNA binding"/>
    <property type="evidence" value="ECO:0000318"/>
    <property type="project" value="GO_Central"/>
</dbReference>
<dbReference type="GO" id="GO:0000977">
    <property type="term" value="F:RNA polymerase II transcription regulatory region sequence-specific DNA binding"/>
    <property type="evidence" value="ECO:0000266"/>
    <property type="project" value="RGD"/>
</dbReference>
<dbReference type="GO" id="GO:1990837">
    <property type="term" value="F:sequence-specific double-stranded DNA binding"/>
    <property type="evidence" value="ECO:0000266"/>
    <property type="project" value="RGD"/>
</dbReference>
<dbReference type="GO" id="GO:0008270">
    <property type="term" value="F:zinc ion binding"/>
    <property type="evidence" value="ECO:0007669"/>
    <property type="project" value="UniProtKB-KW"/>
</dbReference>
<dbReference type="GO" id="GO:0030154">
    <property type="term" value="P:cell differentiation"/>
    <property type="evidence" value="ECO:0000318"/>
    <property type="project" value="GO_Central"/>
</dbReference>
<dbReference type="GO" id="GO:0030522">
    <property type="term" value="P:intracellular receptor signaling pathway"/>
    <property type="evidence" value="ECO:0000318"/>
    <property type="project" value="GO_Central"/>
</dbReference>
<dbReference type="GO" id="GO:0045892">
    <property type="term" value="P:negative regulation of DNA-templated transcription"/>
    <property type="evidence" value="ECO:0000266"/>
    <property type="project" value="RGD"/>
</dbReference>
<dbReference type="GO" id="GO:0000122">
    <property type="term" value="P:negative regulation of transcription by RNA polymerase II"/>
    <property type="evidence" value="ECO:0000318"/>
    <property type="project" value="GO_Central"/>
</dbReference>
<dbReference type="GO" id="GO:0001649">
    <property type="term" value="P:osteoblast differentiation"/>
    <property type="evidence" value="ECO:0000270"/>
    <property type="project" value="RGD"/>
</dbReference>
<dbReference type="GO" id="GO:0045944">
    <property type="term" value="P:positive regulation of transcription by RNA polymerase II"/>
    <property type="evidence" value="ECO:0000266"/>
    <property type="project" value="RGD"/>
</dbReference>
<dbReference type="GO" id="GO:0006355">
    <property type="term" value="P:regulation of DNA-templated transcription"/>
    <property type="evidence" value="ECO:0000266"/>
    <property type="project" value="RGD"/>
</dbReference>
<dbReference type="CDD" id="cd07156">
    <property type="entry name" value="NR_DBD_VDR_like"/>
    <property type="match status" value="1"/>
</dbReference>
<dbReference type="FunFam" id="1.10.565.10:FF:000025">
    <property type="entry name" value="Nuclear receptor subfamily 1 group I member 3"/>
    <property type="match status" value="1"/>
</dbReference>
<dbReference type="FunFam" id="3.30.50.10:FF:000035">
    <property type="entry name" value="Nuclear receptor subfamily 1 group I member 3"/>
    <property type="match status" value="1"/>
</dbReference>
<dbReference type="Gene3D" id="3.30.50.10">
    <property type="entry name" value="Erythroid Transcription Factor GATA-1, subunit A"/>
    <property type="match status" value="1"/>
</dbReference>
<dbReference type="Gene3D" id="1.10.565.10">
    <property type="entry name" value="Retinoid X Receptor"/>
    <property type="match status" value="1"/>
</dbReference>
<dbReference type="InterPro" id="IPR035500">
    <property type="entry name" value="NHR-like_dom_sf"/>
</dbReference>
<dbReference type="InterPro" id="IPR000536">
    <property type="entry name" value="Nucl_hrmn_rcpt_lig-bd"/>
</dbReference>
<dbReference type="InterPro" id="IPR050234">
    <property type="entry name" value="Nuclear_hormone_rcpt_NR1"/>
</dbReference>
<dbReference type="InterPro" id="IPR001723">
    <property type="entry name" value="Nuclear_hrmn_rcpt"/>
</dbReference>
<dbReference type="InterPro" id="IPR001728">
    <property type="entry name" value="ThyrH_rcpt"/>
</dbReference>
<dbReference type="InterPro" id="IPR001628">
    <property type="entry name" value="Znf_hrmn_rcpt"/>
</dbReference>
<dbReference type="InterPro" id="IPR013088">
    <property type="entry name" value="Znf_NHR/GATA"/>
</dbReference>
<dbReference type="PANTHER" id="PTHR24082">
    <property type="entry name" value="NUCLEAR HORMONE RECEPTOR"/>
    <property type="match status" value="1"/>
</dbReference>
<dbReference type="PANTHER" id="PTHR24082:SF231">
    <property type="entry name" value="NUCLEAR RECEPTOR SUBFAMILY 1 GROUP I MEMBER 3"/>
    <property type="match status" value="1"/>
</dbReference>
<dbReference type="Pfam" id="PF00104">
    <property type="entry name" value="Hormone_recep"/>
    <property type="match status" value="1"/>
</dbReference>
<dbReference type="Pfam" id="PF00105">
    <property type="entry name" value="zf-C4"/>
    <property type="match status" value="1"/>
</dbReference>
<dbReference type="PRINTS" id="PR00398">
    <property type="entry name" value="STRDHORMONER"/>
</dbReference>
<dbReference type="PRINTS" id="PR00047">
    <property type="entry name" value="STROIDFINGER"/>
</dbReference>
<dbReference type="PRINTS" id="PR00546">
    <property type="entry name" value="THYROIDHORMR"/>
</dbReference>
<dbReference type="SMART" id="SM00430">
    <property type="entry name" value="HOLI"/>
    <property type="match status" value="1"/>
</dbReference>
<dbReference type="SMART" id="SM00399">
    <property type="entry name" value="ZnF_C4"/>
    <property type="match status" value="1"/>
</dbReference>
<dbReference type="SUPFAM" id="SSF57716">
    <property type="entry name" value="Glucocorticoid receptor-like (DNA-binding domain)"/>
    <property type="match status" value="1"/>
</dbReference>
<dbReference type="SUPFAM" id="SSF48508">
    <property type="entry name" value="Nuclear receptor ligand-binding domain"/>
    <property type="match status" value="1"/>
</dbReference>
<dbReference type="PROSITE" id="PS51843">
    <property type="entry name" value="NR_LBD"/>
    <property type="match status" value="1"/>
</dbReference>
<dbReference type="PROSITE" id="PS00031">
    <property type="entry name" value="NUCLEAR_REC_DBD_1"/>
    <property type="match status" value="1"/>
</dbReference>
<dbReference type="PROSITE" id="PS51030">
    <property type="entry name" value="NUCLEAR_REC_DBD_2"/>
    <property type="match status" value="1"/>
</dbReference>
<organism>
    <name type="scientific">Rattus norvegicus</name>
    <name type="common">Rat</name>
    <dbReference type="NCBI Taxonomy" id="10116"/>
    <lineage>
        <taxon>Eukaryota</taxon>
        <taxon>Metazoa</taxon>
        <taxon>Chordata</taxon>
        <taxon>Craniata</taxon>
        <taxon>Vertebrata</taxon>
        <taxon>Euteleostomi</taxon>
        <taxon>Mammalia</taxon>
        <taxon>Eutheria</taxon>
        <taxon>Euarchontoglires</taxon>
        <taxon>Glires</taxon>
        <taxon>Rodentia</taxon>
        <taxon>Myomorpha</taxon>
        <taxon>Muroidea</taxon>
        <taxon>Muridae</taxon>
        <taxon>Murinae</taxon>
        <taxon>Rattus</taxon>
    </lineage>
</organism>
<protein>
    <recommendedName>
        <fullName>Nuclear receptor subfamily 1 group I member 3</fullName>
    </recommendedName>
    <alternativeName>
        <fullName>Constitutive androstane receptor</fullName>
        <shortName>CAR</shortName>
    </alternativeName>
</protein>